<sequence length="259" mass="28837">MGQRIDVNHENIYYGDFLAVEDVNINIEPNKVTAFIGPSGCGKSTVLRTLDRMHEIIPGAHVEGEVLLEGKNLYDKDVDPVAVRRDVGMVFQRPNPFPTMSIRENVLAGVRLNNHHLAKSDADDLVEWALRGANLWEEVKDRLDNPGIGLSGGQQQRLCIARAVAVHPQVLLMDEPCSALDPISTLAVEDLINELKSDYTIVIVTHNMQQAARIADYTAFFNLKAVGQPGHLEYFADTITMFNNPQNEEAERYISGRFG</sequence>
<accession>Q8G7F4</accession>
<reference key="1">
    <citation type="journal article" date="2002" name="Proc. Natl. Acad. Sci. U.S.A.">
        <title>The genome sequence of Bifidobacterium longum reflects its adaptation to the human gastrointestinal tract.</title>
        <authorList>
            <person name="Schell M.A."/>
            <person name="Karmirantzou M."/>
            <person name="Snel B."/>
            <person name="Vilanova D."/>
            <person name="Berger B."/>
            <person name="Pessi G."/>
            <person name="Zwahlen M.-C."/>
            <person name="Desiere F."/>
            <person name="Bork P."/>
            <person name="Delley M."/>
            <person name="Pridmore R.D."/>
            <person name="Arigoni F."/>
        </authorList>
    </citation>
    <scope>NUCLEOTIDE SEQUENCE [LARGE SCALE GENOMIC DNA]</scope>
    <source>
        <strain>NCC 2705</strain>
    </source>
</reference>
<gene>
    <name evidence="1" type="primary">pstB</name>
    <name type="ordered locus">BL0312</name>
</gene>
<name>PSTB_BIFLO</name>
<dbReference type="EC" id="7.3.2.1" evidence="1"/>
<dbReference type="EMBL" id="AE014295">
    <property type="protein sequence ID" value="AAN24152.1"/>
    <property type="molecule type" value="Genomic_DNA"/>
</dbReference>
<dbReference type="RefSeq" id="NP_695516.1">
    <property type="nucleotide sequence ID" value="NC_004307.2"/>
</dbReference>
<dbReference type="RefSeq" id="WP_007051433.1">
    <property type="nucleotide sequence ID" value="NC_004307.2"/>
</dbReference>
<dbReference type="SMR" id="Q8G7F4"/>
<dbReference type="STRING" id="206672.BL0312"/>
<dbReference type="EnsemblBacteria" id="AAN24152">
    <property type="protein sequence ID" value="AAN24152"/>
    <property type="gene ID" value="BL0312"/>
</dbReference>
<dbReference type="KEGG" id="blo:BL0312"/>
<dbReference type="PATRIC" id="fig|206672.9.peg.1050"/>
<dbReference type="HOGENOM" id="CLU_000604_1_22_11"/>
<dbReference type="OrthoDB" id="4283894at2"/>
<dbReference type="PhylomeDB" id="Q8G7F4"/>
<dbReference type="Proteomes" id="UP000000439">
    <property type="component" value="Chromosome"/>
</dbReference>
<dbReference type="GO" id="GO:0005886">
    <property type="term" value="C:plasma membrane"/>
    <property type="evidence" value="ECO:0007669"/>
    <property type="project" value="UniProtKB-SubCell"/>
</dbReference>
<dbReference type="GO" id="GO:0005524">
    <property type="term" value="F:ATP binding"/>
    <property type="evidence" value="ECO:0007669"/>
    <property type="project" value="UniProtKB-KW"/>
</dbReference>
<dbReference type="GO" id="GO:0016887">
    <property type="term" value="F:ATP hydrolysis activity"/>
    <property type="evidence" value="ECO:0007669"/>
    <property type="project" value="InterPro"/>
</dbReference>
<dbReference type="GO" id="GO:0015415">
    <property type="term" value="F:ATPase-coupled phosphate ion transmembrane transporter activity"/>
    <property type="evidence" value="ECO:0007669"/>
    <property type="project" value="UniProtKB-EC"/>
</dbReference>
<dbReference type="GO" id="GO:0035435">
    <property type="term" value="P:phosphate ion transmembrane transport"/>
    <property type="evidence" value="ECO:0007669"/>
    <property type="project" value="InterPro"/>
</dbReference>
<dbReference type="CDD" id="cd03260">
    <property type="entry name" value="ABC_PstB_phosphate_transporter"/>
    <property type="match status" value="1"/>
</dbReference>
<dbReference type="Gene3D" id="3.40.50.300">
    <property type="entry name" value="P-loop containing nucleotide triphosphate hydrolases"/>
    <property type="match status" value="1"/>
</dbReference>
<dbReference type="InterPro" id="IPR003593">
    <property type="entry name" value="AAA+_ATPase"/>
</dbReference>
<dbReference type="InterPro" id="IPR003439">
    <property type="entry name" value="ABC_transporter-like_ATP-bd"/>
</dbReference>
<dbReference type="InterPro" id="IPR017871">
    <property type="entry name" value="ABC_transporter-like_CS"/>
</dbReference>
<dbReference type="InterPro" id="IPR027417">
    <property type="entry name" value="P-loop_NTPase"/>
</dbReference>
<dbReference type="InterPro" id="IPR005670">
    <property type="entry name" value="PstB-like"/>
</dbReference>
<dbReference type="NCBIfam" id="TIGR00972">
    <property type="entry name" value="3a0107s01c2"/>
    <property type="match status" value="1"/>
</dbReference>
<dbReference type="PANTHER" id="PTHR43423">
    <property type="entry name" value="ABC TRANSPORTER I FAMILY MEMBER 17"/>
    <property type="match status" value="1"/>
</dbReference>
<dbReference type="PANTHER" id="PTHR43423:SF1">
    <property type="entry name" value="ABC TRANSPORTER I FAMILY MEMBER 17"/>
    <property type="match status" value="1"/>
</dbReference>
<dbReference type="Pfam" id="PF00005">
    <property type="entry name" value="ABC_tran"/>
    <property type="match status" value="1"/>
</dbReference>
<dbReference type="SMART" id="SM00382">
    <property type="entry name" value="AAA"/>
    <property type="match status" value="1"/>
</dbReference>
<dbReference type="SUPFAM" id="SSF52540">
    <property type="entry name" value="P-loop containing nucleoside triphosphate hydrolases"/>
    <property type="match status" value="1"/>
</dbReference>
<dbReference type="PROSITE" id="PS00211">
    <property type="entry name" value="ABC_TRANSPORTER_1"/>
    <property type="match status" value="1"/>
</dbReference>
<dbReference type="PROSITE" id="PS50893">
    <property type="entry name" value="ABC_TRANSPORTER_2"/>
    <property type="match status" value="1"/>
</dbReference>
<dbReference type="PROSITE" id="PS51238">
    <property type="entry name" value="PSTB"/>
    <property type="match status" value="1"/>
</dbReference>
<keyword id="KW-0067">ATP-binding</keyword>
<keyword id="KW-1003">Cell membrane</keyword>
<keyword id="KW-0472">Membrane</keyword>
<keyword id="KW-0547">Nucleotide-binding</keyword>
<keyword id="KW-0592">Phosphate transport</keyword>
<keyword id="KW-1185">Reference proteome</keyword>
<keyword id="KW-1278">Translocase</keyword>
<keyword id="KW-0813">Transport</keyword>
<comment type="function">
    <text evidence="1">Part of the ABC transporter complex PstSACB involved in phosphate import. Responsible for energy coupling to the transport system.</text>
</comment>
<comment type="catalytic activity">
    <reaction evidence="1">
        <text>phosphate(out) + ATP + H2O = ADP + 2 phosphate(in) + H(+)</text>
        <dbReference type="Rhea" id="RHEA:24440"/>
        <dbReference type="ChEBI" id="CHEBI:15377"/>
        <dbReference type="ChEBI" id="CHEBI:15378"/>
        <dbReference type="ChEBI" id="CHEBI:30616"/>
        <dbReference type="ChEBI" id="CHEBI:43474"/>
        <dbReference type="ChEBI" id="CHEBI:456216"/>
        <dbReference type="EC" id="7.3.2.1"/>
    </reaction>
</comment>
<comment type="subunit">
    <text evidence="1">The complex is composed of two ATP-binding proteins (PstB), two transmembrane proteins (PstC and PstA) and a solute-binding protein (PstS).</text>
</comment>
<comment type="subcellular location">
    <subcellularLocation>
        <location evidence="1">Cell membrane</location>
        <topology evidence="1">Peripheral membrane protein</topology>
    </subcellularLocation>
</comment>
<comment type="similarity">
    <text evidence="1">Belongs to the ABC transporter superfamily. Phosphate importer (TC 3.A.1.7) family.</text>
</comment>
<evidence type="ECO:0000255" key="1">
    <source>
        <dbReference type="HAMAP-Rule" id="MF_01702"/>
    </source>
</evidence>
<proteinExistence type="inferred from homology"/>
<feature type="chain" id="PRO_0000092786" description="Phosphate import ATP-binding protein PstB">
    <location>
        <begin position="1"/>
        <end position="259"/>
    </location>
</feature>
<feature type="domain" description="ABC transporter" evidence="1">
    <location>
        <begin position="2"/>
        <end position="248"/>
    </location>
</feature>
<feature type="binding site" evidence="1">
    <location>
        <begin position="37"/>
        <end position="44"/>
    </location>
    <ligand>
        <name>ATP</name>
        <dbReference type="ChEBI" id="CHEBI:30616"/>
    </ligand>
</feature>
<organism>
    <name type="scientific">Bifidobacterium longum (strain NCC 2705)</name>
    <dbReference type="NCBI Taxonomy" id="206672"/>
    <lineage>
        <taxon>Bacteria</taxon>
        <taxon>Bacillati</taxon>
        <taxon>Actinomycetota</taxon>
        <taxon>Actinomycetes</taxon>
        <taxon>Bifidobacteriales</taxon>
        <taxon>Bifidobacteriaceae</taxon>
        <taxon>Bifidobacterium</taxon>
    </lineage>
</organism>
<protein>
    <recommendedName>
        <fullName evidence="1">Phosphate import ATP-binding protein PstB</fullName>
        <ecNumber evidence="1">7.3.2.1</ecNumber>
    </recommendedName>
    <alternativeName>
        <fullName evidence="1">ABC phosphate transporter</fullName>
    </alternativeName>
    <alternativeName>
        <fullName evidence="1">Phosphate-transporting ATPase</fullName>
    </alternativeName>
</protein>